<dbReference type="EC" id="3.1.1.64" evidence="4 5"/>
<dbReference type="EC" id="5.3.3.22" evidence="6"/>
<dbReference type="EMBL" id="AB017594">
    <property type="protein sequence ID" value="BAA75667.1"/>
    <property type="molecule type" value="mRNA"/>
</dbReference>
<dbReference type="RefSeq" id="NP_990215.1">
    <property type="nucleotide sequence ID" value="NM_204884.2"/>
</dbReference>
<dbReference type="SMR" id="Q9YGX2"/>
<dbReference type="FunCoup" id="Q9YGX2">
    <property type="interactions" value="29"/>
</dbReference>
<dbReference type="STRING" id="9031.ENSGALP00000018351"/>
<dbReference type="ChEMBL" id="CHEMBL4523514"/>
<dbReference type="PaxDb" id="9031-ENSGALP00000018351"/>
<dbReference type="Ensembl" id="ENSGALT00000018373">
    <property type="protein sequence ID" value="ENSGALP00000018351"/>
    <property type="gene ID" value="ENSGALG00000011259"/>
</dbReference>
<dbReference type="GeneID" id="395700"/>
<dbReference type="KEGG" id="gga:395700"/>
<dbReference type="CTD" id="6121"/>
<dbReference type="VEuPathDB" id="HostDB:geneid_395700"/>
<dbReference type="eggNOG" id="KOG1285">
    <property type="taxonomic scope" value="Eukaryota"/>
</dbReference>
<dbReference type="HOGENOM" id="CLU_016472_1_1_1"/>
<dbReference type="InParanoid" id="Q9YGX2"/>
<dbReference type="OrthoDB" id="1069523at2759"/>
<dbReference type="PhylomeDB" id="Q9YGX2"/>
<dbReference type="BRENDA" id="5.3.3.22">
    <property type="organism ID" value="1306"/>
</dbReference>
<dbReference type="PRO" id="PR:Q9YGX2"/>
<dbReference type="Proteomes" id="UP000000539">
    <property type="component" value="Unassembled WGS sequence"/>
</dbReference>
<dbReference type="GO" id="GO:0005789">
    <property type="term" value="C:endoplasmic reticulum membrane"/>
    <property type="evidence" value="ECO:0000250"/>
    <property type="project" value="UniProtKB"/>
</dbReference>
<dbReference type="GO" id="GO:0016020">
    <property type="term" value="C:membrane"/>
    <property type="evidence" value="ECO:0000250"/>
    <property type="project" value="AgBase"/>
</dbReference>
<dbReference type="GO" id="GO:0005886">
    <property type="term" value="C:plasma membrane"/>
    <property type="evidence" value="ECO:0007669"/>
    <property type="project" value="UniProtKB-SubCell"/>
</dbReference>
<dbReference type="GO" id="GO:0052885">
    <property type="term" value="F:all-trans-retinyl-ester hydrolase, 11-cis retinol forming activity"/>
    <property type="evidence" value="ECO:0000314"/>
    <property type="project" value="UniProtKB"/>
</dbReference>
<dbReference type="GO" id="GO:0052884">
    <property type="term" value="F:all-trans-retinyl-palmitate hydrolase, 11-cis retinol forming activity"/>
    <property type="evidence" value="ECO:0007669"/>
    <property type="project" value="RHEA"/>
</dbReference>
<dbReference type="GO" id="GO:1901612">
    <property type="term" value="F:cardiolipin binding"/>
    <property type="evidence" value="ECO:0000250"/>
    <property type="project" value="AgBase"/>
</dbReference>
<dbReference type="GO" id="GO:0016853">
    <property type="term" value="F:isomerase activity"/>
    <property type="evidence" value="ECO:0000314"/>
    <property type="project" value="UniProtKB"/>
</dbReference>
<dbReference type="GO" id="GO:0046872">
    <property type="term" value="F:metal ion binding"/>
    <property type="evidence" value="ECO:0007669"/>
    <property type="project" value="UniProtKB-KW"/>
</dbReference>
<dbReference type="GO" id="GO:0016702">
    <property type="term" value="F:oxidoreductase activity, acting on single donors with incorporation of molecular oxygen, incorporation of two atoms of oxygen"/>
    <property type="evidence" value="ECO:0007669"/>
    <property type="project" value="InterPro"/>
</dbReference>
<dbReference type="GO" id="GO:0031210">
    <property type="term" value="F:phosphatidylcholine binding"/>
    <property type="evidence" value="ECO:0000250"/>
    <property type="project" value="AgBase"/>
</dbReference>
<dbReference type="GO" id="GO:0001786">
    <property type="term" value="F:phosphatidylserine binding"/>
    <property type="evidence" value="ECO:0000250"/>
    <property type="project" value="AgBase"/>
</dbReference>
<dbReference type="GO" id="GO:0001523">
    <property type="term" value="P:retinoid metabolic process"/>
    <property type="evidence" value="ECO:0000314"/>
    <property type="project" value="UniProtKB"/>
</dbReference>
<dbReference type="GO" id="GO:0007601">
    <property type="term" value="P:visual perception"/>
    <property type="evidence" value="ECO:0007669"/>
    <property type="project" value="UniProtKB-KW"/>
</dbReference>
<dbReference type="GO" id="GO:1901827">
    <property type="term" value="P:zeaxanthin biosynthetic process"/>
    <property type="evidence" value="ECO:0000314"/>
    <property type="project" value="UniProtKB"/>
</dbReference>
<dbReference type="InterPro" id="IPR004294">
    <property type="entry name" value="Carotenoid_Oase"/>
</dbReference>
<dbReference type="PANTHER" id="PTHR10543">
    <property type="entry name" value="BETA-CAROTENE DIOXYGENASE"/>
    <property type="match status" value="1"/>
</dbReference>
<dbReference type="PANTHER" id="PTHR10543:SF57">
    <property type="entry name" value="RETINOID ISOMEROHYDROLASE"/>
    <property type="match status" value="1"/>
</dbReference>
<dbReference type="Pfam" id="PF03055">
    <property type="entry name" value="RPE65"/>
    <property type="match status" value="1"/>
</dbReference>
<comment type="function">
    <text evidence="2 3 4 6">Critical isomerohydrolase in the retinoid cycle involved in regeneration of 11-cis-retinal, the chromophore of rod and cone opsins. Catalyzes the cleavage and isomerization of all-trans-retinyl fatty acid esters to 11-cis-retinol which is further oxidized by 11-cis retinol dehydrogenase to 11-cis-retinal for use as visual chromophore (PubMed:19490105). Essential for the production of 11-cis retinal for both rod and cone photoreceptors (By similarity). Also capable of catalyzing the isomerization of lutein to meso-zeaxanthin an eye-specific carotenoid (PubMed:28874556). The soluble form binds vitamin A (all-trans-retinol), making it available for LRAT processing to all-trans-retinyl ester. The membrane form, palmitoylated by LRAT, binds all-trans-retinyl esters, making them available for IMH (isomerohydrolase) processing to all-cis-retinol. The soluble form is regenerated by transferring its palmitoyl groups onto 11-cis-retinol, a reaction catalyzed by LRAT (By similarity).</text>
</comment>
<comment type="catalytic activity">
    <reaction evidence="4">
        <text>an all-trans-retinyl ester + H2O = 11-cis-retinol + a fatty acid + H(+)</text>
        <dbReference type="Rhea" id="RHEA:31771"/>
        <dbReference type="ChEBI" id="CHEBI:15377"/>
        <dbReference type="ChEBI" id="CHEBI:15378"/>
        <dbReference type="ChEBI" id="CHEBI:16302"/>
        <dbReference type="ChEBI" id="CHEBI:28868"/>
        <dbReference type="ChEBI" id="CHEBI:63410"/>
        <dbReference type="EC" id="3.1.1.64"/>
    </reaction>
</comment>
<comment type="catalytic activity">
    <reaction evidence="6">
        <text>lutein = (3R,3'S)-zeaxanthin</text>
        <dbReference type="Rhea" id="RHEA:12729"/>
        <dbReference type="ChEBI" id="CHEBI:28838"/>
        <dbReference type="ChEBI" id="CHEBI:138919"/>
        <dbReference type="EC" id="5.3.3.22"/>
    </reaction>
</comment>
<comment type="catalytic activity">
    <reaction evidence="5">
        <text>all-trans-retinyl hexadecanoate + H2O = 11-cis-retinol + hexadecanoate + H(+)</text>
        <dbReference type="Rhea" id="RHEA:31775"/>
        <dbReference type="ChEBI" id="CHEBI:7896"/>
        <dbReference type="ChEBI" id="CHEBI:15377"/>
        <dbReference type="ChEBI" id="CHEBI:15378"/>
        <dbReference type="ChEBI" id="CHEBI:16302"/>
        <dbReference type="ChEBI" id="CHEBI:17616"/>
        <dbReference type="EC" id="3.1.1.64"/>
    </reaction>
</comment>
<comment type="cofactor">
    <cofactor evidence="3">
        <name>Fe(2+)</name>
        <dbReference type="ChEBI" id="CHEBI:29033"/>
    </cofactor>
    <text evidence="3">Binds 1 Fe(2+) ion per subunit.</text>
</comment>
<comment type="biophysicochemical properties">
    <kinetics>
        <KM evidence="4">3.7 uM for all-trans-retinyl palmitate</KM>
    </kinetics>
</comment>
<comment type="subcellular location">
    <subcellularLocation>
        <location evidence="1">Cytoplasm</location>
    </subcellularLocation>
    <subcellularLocation>
        <location evidence="3">Cell membrane</location>
        <topology evidence="3">Lipid-anchor</topology>
    </subcellularLocation>
    <subcellularLocation>
        <location evidence="3">Microsome membrane</location>
    </subcellularLocation>
    <text evidence="3">Attached to the membrane by a lipid anchor when palmitoylated (membrane form), soluble when unpalmitoylated.</text>
</comment>
<comment type="tissue specificity">
    <text>Retinal pigment epithelium specific.</text>
</comment>
<comment type="developmental stage">
    <text evidence="6">Highly expressed in the retinal pigment epithelium (RPE)/ choroid of the 21 dpc embryos (at protein level).</text>
</comment>
<comment type="PTM">
    <text evidence="3">Palmitoylation by LRAT regulates ligand binding specificity; the palmitoylated form (membrane form) specifically binds all-trans-retinyl-palmitate, while the soluble unpalmitoylated form binds all-trans-retinol (vitamin A).</text>
</comment>
<comment type="similarity">
    <text evidence="8">Belongs to the carotenoid oxygenase family.</text>
</comment>
<keyword id="KW-1003">Cell membrane</keyword>
<keyword id="KW-0963">Cytoplasm</keyword>
<keyword id="KW-0256">Endoplasmic reticulum</keyword>
<keyword id="KW-0378">Hydrolase</keyword>
<keyword id="KW-0408">Iron</keyword>
<keyword id="KW-0413">Isomerase</keyword>
<keyword id="KW-0443">Lipid metabolism</keyword>
<keyword id="KW-0449">Lipoprotein</keyword>
<keyword id="KW-0472">Membrane</keyword>
<keyword id="KW-0479">Metal-binding</keyword>
<keyword id="KW-0492">Microsome</keyword>
<keyword id="KW-0564">Palmitate</keyword>
<keyword id="KW-0597">Phosphoprotein</keyword>
<keyword id="KW-1185">Reference proteome</keyword>
<keyword id="KW-0716">Sensory transduction</keyword>
<keyword id="KW-0844">Vision</keyword>
<accession>Q9YGX2</accession>
<evidence type="ECO:0000250" key="1">
    <source>
        <dbReference type="UniProtKB" id="A9C3R9"/>
    </source>
</evidence>
<evidence type="ECO:0000250" key="2">
    <source>
        <dbReference type="UniProtKB" id="Q16518"/>
    </source>
</evidence>
<evidence type="ECO:0000250" key="3">
    <source>
        <dbReference type="UniProtKB" id="Q28175"/>
    </source>
</evidence>
<evidence type="ECO:0000269" key="4">
    <source>
    </source>
</evidence>
<evidence type="ECO:0000269" key="5">
    <source>
    </source>
</evidence>
<evidence type="ECO:0000269" key="6">
    <source>
    </source>
</evidence>
<evidence type="ECO:0000303" key="7">
    <source>
    </source>
</evidence>
<evidence type="ECO:0000305" key="8"/>
<proteinExistence type="evidence at protein level"/>
<reference key="1">
    <citation type="thesis" date="1998" institute="University of Tokyo" country="Japan">
        <title>Investigation of an endoplasmic reticulum related protein in the vertebrate retinal pigment epithelium.</title>
        <authorList>
            <person name="Hirosawa K."/>
            <person name="Sagara H."/>
        </authorList>
    </citation>
    <scope>NUCLEOTIDE SEQUENCE [MRNA]</scope>
    <source>
        <tissue>Eye</tissue>
    </source>
</reference>
<reference key="2">
    <citation type="journal article" date="2009" name="FEBS J.">
        <title>Purified RPE65 shows isomerohydrolase activity after reassociation with a phospholipid membrane.</title>
        <authorList>
            <person name="Nikolaeva O."/>
            <person name="Takahashi Y."/>
            <person name="Moiseyev G."/>
            <person name="Ma J.X."/>
        </authorList>
    </citation>
    <scope>FUNCTION</scope>
    <scope>CATALYTIC ACTIVITY</scope>
    <scope>BIOPHYSICOCHEMICAL PROPERTIES</scope>
</reference>
<reference key="3">
    <citation type="journal article" date="2014" name="J. Biol. Chem.">
        <title>Identification of key residues determining isomerohydrolase activity of human RPE65.</title>
        <authorList>
            <person name="Takahashi Y."/>
            <person name="Moiseyev G."/>
            <person name="Ma J.X."/>
        </authorList>
    </citation>
    <scope>CATALYTIC ACTIVITY</scope>
    <scope>FUNCTION</scope>
</reference>
<reference key="4">
    <citation type="journal article" date="2017" name="Proc. Natl. Acad. Sci. U.S.A.">
        <title>RPE65 has an additional function as the lutein to meso-zeaxanthin isomerase in the vertebrate eye.</title>
        <authorList>
            <person name="Shyam R."/>
            <person name="Gorusupudi A."/>
            <person name="Nelson K."/>
            <person name="Horvath M.P."/>
            <person name="Bernstein P.S."/>
        </authorList>
    </citation>
    <scope>FUNCTION</scope>
    <scope>CATALYTIC ACTIVITY</scope>
    <scope>DEVELOPMENTAL STAGE</scope>
</reference>
<sequence length="533" mass="60930">MYSQVEHPAGGYKKLFETVEELSSPVTAHVTGRIPTWLRGSLLRCGPGLFEVGAEPFYHLFDGQALLHKFDFKEGHVTYHRRFVRTDAYVRAMTEKRIVITEFGTYAYPDPCKNIFSRFFSYFKGVEVTDNALVNVYPVGEDYYACTETNFITKINPDTLETIKQVDLCKYVSVNGATAHPHVENDGTVYNIGNCFGKNFSLAYNIIRIPPLQADKEDPMNKSEVVVQFPCSDRFKPSYVHSFGLTPNYIVFVETPVKINLLKFLSSWSLWGANYMDCFESNETMGVWLHVAEKKKGRLLNIKYRTSAFNLFHHINTFEDNGFLIVDLCTWKGFEFVYNYLYLANLRANWDEVKKQAEKAPQPEARRYVLPLRIDKADTGKNLVTLPYTTATATLRSDETVWLEPEVIFSGPRHAFEFPQINYKKYGGKPYTYTYGLGLNHFVPDRLCKLNVKTKETWVWQEPDSYPSEPIFVSHPDALEEDDGVVLSIVISPGSGPKPAYLLILNAKDMSEVARAEVEVNIPVTFHGLFKRA</sequence>
<name>RPE65_CHICK</name>
<protein>
    <recommendedName>
        <fullName>Retinoid isomerohydrolase</fullName>
        <ecNumber evidence="4 5">3.1.1.64</ecNumber>
    </recommendedName>
    <alternativeName>
        <fullName>All-trans-retinyl-palmitate hydrolase</fullName>
    </alternativeName>
    <alternativeName>
        <fullName>Lutein isomerase</fullName>
    </alternativeName>
    <alternativeName>
        <fullName evidence="7">Meso-zeaxanthin isomerase</fullName>
        <ecNumber evidence="6">5.3.3.22</ecNumber>
    </alternativeName>
    <alternativeName>
        <fullName>Retinal pigment epithelium-specific 65 kDa protein</fullName>
    </alternativeName>
    <alternativeName>
        <fullName>Retinol isomerase</fullName>
    </alternativeName>
</protein>
<organism>
    <name type="scientific">Gallus gallus</name>
    <name type="common">Chicken</name>
    <dbReference type="NCBI Taxonomy" id="9031"/>
    <lineage>
        <taxon>Eukaryota</taxon>
        <taxon>Metazoa</taxon>
        <taxon>Chordata</taxon>
        <taxon>Craniata</taxon>
        <taxon>Vertebrata</taxon>
        <taxon>Euteleostomi</taxon>
        <taxon>Archelosauria</taxon>
        <taxon>Archosauria</taxon>
        <taxon>Dinosauria</taxon>
        <taxon>Saurischia</taxon>
        <taxon>Theropoda</taxon>
        <taxon>Coelurosauria</taxon>
        <taxon>Aves</taxon>
        <taxon>Neognathae</taxon>
        <taxon>Galloanserae</taxon>
        <taxon>Galliformes</taxon>
        <taxon>Phasianidae</taxon>
        <taxon>Phasianinae</taxon>
        <taxon>Gallus</taxon>
    </lineage>
</organism>
<feature type="chain" id="PRO_0000143946" description="Retinoid isomerohydrolase">
    <location>
        <begin position="1"/>
        <end position="533"/>
    </location>
</feature>
<feature type="binding site" evidence="3">
    <location>
        <position position="180"/>
    </location>
    <ligand>
        <name>Fe cation</name>
        <dbReference type="ChEBI" id="CHEBI:24875"/>
        <note>catalytic</note>
    </ligand>
</feature>
<feature type="binding site" evidence="3">
    <location>
        <position position="241"/>
    </location>
    <ligand>
        <name>Fe cation</name>
        <dbReference type="ChEBI" id="CHEBI:24875"/>
        <note>catalytic</note>
    </ligand>
</feature>
<feature type="binding site" evidence="3">
    <location>
        <position position="313"/>
    </location>
    <ligand>
        <name>Fe cation</name>
        <dbReference type="ChEBI" id="CHEBI:24875"/>
        <note>catalytic</note>
    </ligand>
</feature>
<feature type="binding site" evidence="3">
    <location>
        <position position="527"/>
    </location>
    <ligand>
        <name>Fe cation</name>
        <dbReference type="ChEBI" id="CHEBI:24875"/>
        <note>catalytic</note>
    </ligand>
</feature>
<feature type="modified residue" description="Phosphoserine" evidence="2">
    <location>
        <position position="117"/>
    </location>
</feature>
<feature type="lipid moiety-binding region" description="S-palmitoyl cysteine; in membrane form" evidence="3">
    <location>
        <position position="112"/>
    </location>
</feature>
<feature type="lipid moiety-binding region" description="S-palmitoyl cysteine; in membrane form" evidence="3">
    <location>
        <position position="231"/>
    </location>
</feature>
<feature type="lipid moiety-binding region" description="S-palmitoyl cysteine; in membrane form" evidence="3">
    <location>
        <position position="329"/>
    </location>
</feature>
<gene>
    <name type="primary">RPE65</name>
</gene>